<feature type="chain" id="PRO_1000067527" description="Large ribosomal subunit protein uL1">
    <location>
        <begin position="1"/>
        <end position="232"/>
    </location>
</feature>
<gene>
    <name evidence="1" type="primary">rplA</name>
    <name type="ordered locus">BPUM_0088</name>
</gene>
<protein>
    <recommendedName>
        <fullName evidence="1">Large ribosomal subunit protein uL1</fullName>
    </recommendedName>
    <alternativeName>
        <fullName evidence="2">50S ribosomal protein L1</fullName>
    </alternativeName>
</protein>
<evidence type="ECO:0000255" key="1">
    <source>
        <dbReference type="HAMAP-Rule" id="MF_01318"/>
    </source>
</evidence>
<evidence type="ECO:0000305" key="2"/>
<organism>
    <name type="scientific">Bacillus pumilus (strain SAFR-032)</name>
    <dbReference type="NCBI Taxonomy" id="315750"/>
    <lineage>
        <taxon>Bacteria</taxon>
        <taxon>Bacillati</taxon>
        <taxon>Bacillota</taxon>
        <taxon>Bacilli</taxon>
        <taxon>Bacillales</taxon>
        <taxon>Bacillaceae</taxon>
        <taxon>Bacillus</taxon>
    </lineage>
</organism>
<accession>A8F971</accession>
<dbReference type="EMBL" id="CP000813">
    <property type="protein sequence ID" value="ABV60788.1"/>
    <property type="molecule type" value="Genomic_DNA"/>
</dbReference>
<dbReference type="RefSeq" id="WP_007496292.1">
    <property type="nucleotide sequence ID" value="NZ_VEIS01000020.1"/>
</dbReference>
<dbReference type="SMR" id="A8F971"/>
<dbReference type="STRING" id="315750.BPUM_0088"/>
<dbReference type="GeneID" id="5619331"/>
<dbReference type="KEGG" id="bpu:BPUM_0088"/>
<dbReference type="eggNOG" id="COG0081">
    <property type="taxonomic scope" value="Bacteria"/>
</dbReference>
<dbReference type="HOGENOM" id="CLU_062853_0_0_9"/>
<dbReference type="OrthoDB" id="9803740at2"/>
<dbReference type="Proteomes" id="UP000001355">
    <property type="component" value="Chromosome"/>
</dbReference>
<dbReference type="GO" id="GO:0015934">
    <property type="term" value="C:large ribosomal subunit"/>
    <property type="evidence" value="ECO:0007669"/>
    <property type="project" value="InterPro"/>
</dbReference>
<dbReference type="GO" id="GO:0019843">
    <property type="term" value="F:rRNA binding"/>
    <property type="evidence" value="ECO:0007669"/>
    <property type="project" value="UniProtKB-UniRule"/>
</dbReference>
<dbReference type="GO" id="GO:0003735">
    <property type="term" value="F:structural constituent of ribosome"/>
    <property type="evidence" value="ECO:0007669"/>
    <property type="project" value="InterPro"/>
</dbReference>
<dbReference type="GO" id="GO:0000049">
    <property type="term" value="F:tRNA binding"/>
    <property type="evidence" value="ECO:0007669"/>
    <property type="project" value="UniProtKB-KW"/>
</dbReference>
<dbReference type="GO" id="GO:0006417">
    <property type="term" value="P:regulation of translation"/>
    <property type="evidence" value="ECO:0007669"/>
    <property type="project" value="UniProtKB-KW"/>
</dbReference>
<dbReference type="GO" id="GO:0006412">
    <property type="term" value="P:translation"/>
    <property type="evidence" value="ECO:0007669"/>
    <property type="project" value="UniProtKB-UniRule"/>
</dbReference>
<dbReference type="CDD" id="cd00403">
    <property type="entry name" value="Ribosomal_L1"/>
    <property type="match status" value="1"/>
</dbReference>
<dbReference type="FunFam" id="3.40.50.790:FF:000001">
    <property type="entry name" value="50S ribosomal protein L1"/>
    <property type="match status" value="1"/>
</dbReference>
<dbReference type="Gene3D" id="3.30.190.20">
    <property type="match status" value="1"/>
</dbReference>
<dbReference type="Gene3D" id="3.40.50.790">
    <property type="match status" value="1"/>
</dbReference>
<dbReference type="HAMAP" id="MF_01318_B">
    <property type="entry name" value="Ribosomal_uL1_B"/>
    <property type="match status" value="1"/>
</dbReference>
<dbReference type="InterPro" id="IPR005878">
    <property type="entry name" value="Ribosom_uL1_bac-type"/>
</dbReference>
<dbReference type="InterPro" id="IPR002143">
    <property type="entry name" value="Ribosomal_uL1"/>
</dbReference>
<dbReference type="InterPro" id="IPR023674">
    <property type="entry name" value="Ribosomal_uL1-like"/>
</dbReference>
<dbReference type="InterPro" id="IPR028364">
    <property type="entry name" value="Ribosomal_uL1/biogenesis"/>
</dbReference>
<dbReference type="InterPro" id="IPR016095">
    <property type="entry name" value="Ribosomal_uL1_3-a/b-sand"/>
</dbReference>
<dbReference type="InterPro" id="IPR023673">
    <property type="entry name" value="Ribosomal_uL1_CS"/>
</dbReference>
<dbReference type="NCBIfam" id="TIGR01169">
    <property type="entry name" value="rplA_bact"/>
    <property type="match status" value="1"/>
</dbReference>
<dbReference type="PANTHER" id="PTHR36427">
    <property type="entry name" value="54S RIBOSOMAL PROTEIN L1, MITOCHONDRIAL"/>
    <property type="match status" value="1"/>
</dbReference>
<dbReference type="PANTHER" id="PTHR36427:SF3">
    <property type="entry name" value="LARGE RIBOSOMAL SUBUNIT PROTEIN UL1M"/>
    <property type="match status" value="1"/>
</dbReference>
<dbReference type="Pfam" id="PF00687">
    <property type="entry name" value="Ribosomal_L1"/>
    <property type="match status" value="1"/>
</dbReference>
<dbReference type="PIRSF" id="PIRSF002155">
    <property type="entry name" value="Ribosomal_L1"/>
    <property type="match status" value="1"/>
</dbReference>
<dbReference type="SUPFAM" id="SSF56808">
    <property type="entry name" value="Ribosomal protein L1"/>
    <property type="match status" value="1"/>
</dbReference>
<dbReference type="PROSITE" id="PS01199">
    <property type="entry name" value="RIBOSOMAL_L1"/>
    <property type="match status" value="1"/>
</dbReference>
<sequence>MAKKGKKYVEAAKLIERTKAYDVAEAVSLTKKANTAKFDATVEVAFRLGVDPRKNDQQIRGAVVLPNGTGKTQRVLVFAKGEKAKEAEAAGADYVGDSDYITKIQQGWFEFDVIVATPDMMGEVGKIGRVLGPKGLMPNPKTGTVTFEVEKAINEIKAGKVEYRVDKAGNIHAPIGKVSFEDEKLVENFATIYDTILKAKPAAAKGVYVKNVSVTSTMGPGVKVDPSSFSAK</sequence>
<proteinExistence type="inferred from homology"/>
<keyword id="KW-0678">Repressor</keyword>
<keyword id="KW-0687">Ribonucleoprotein</keyword>
<keyword id="KW-0689">Ribosomal protein</keyword>
<keyword id="KW-0694">RNA-binding</keyword>
<keyword id="KW-0699">rRNA-binding</keyword>
<keyword id="KW-0810">Translation regulation</keyword>
<keyword id="KW-0820">tRNA-binding</keyword>
<name>RL1_BACP2</name>
<reference key="1">
    <citation type="journal article" date="2007" name="PLoS ONE">
        <title>Paradoxical DNA repair and peroxide resistance gene conservation in Bacillus pumilus SAFR-032.</title>
        <authorList>
            <person name="Gioia J."/>
            <person name="Yerrapragada S."/>
            <person name="Qin X."/>
            <person name="Jiang H."/>
            <person name="Igboeli O.C."/>
            <person name="Muzny D."/>
            <person name="Dugan-Rocha S."/>
            <person name="Ding Y."/>
            <person name="Hawes A."/>
            <person name="Liu W."/>
            <person name="Perez L."/>
            <person name="Kovar C."/>
            <person name="Dinh H."/>
            <person name="Lee S."/>
            <person name="Nazareth L."/>
            <person name="Blyth P."/>
            <person name="Holder M."/>
            <person name="Buhay C."/>
            <person name="Tirumalai M.R."/>
            <person name="Liu Y."/>
            <person name="Dasgupta I."/>
            <person name="Bokhetache L."/>
            <person name="Fujita M."/>
            <person name="Karouia F."/>
            <person name="Eswara Moorthy P."/>
            <person name="Siefert J."/>
            <person name="Uzman A."/>
            <person name="Buzumbo P."/>
            <person name="Verma A."/>
            <person name="Zwiya H."/>
            <person name="McWilliams B.D."/>
            <person name="Olowu A."/>
            <person name="Clinkenbeard K.D."/>
            <person name="Newcombe D."/>
            <person name="Golebiewski L."/>
            <person name="Petrosino J.F."/>
            <person name="Nicholson W.L."/>
            <person name="Fox G.E."/>
            <person name="Venkateswaran K."/>
            <person name="Highlander S.K."/>
            <person name="Weinstock G.M."/>
        </authorList>
    </citation>
    <scope>NUCLEOTIDE SEQUENCE [LARGE SCALE GENOMIC DNA]</scope>
    <source>
        <strain>SAFR-032</strain>
    </source>
</reference>
<comment type="function">
    <text evidence="1">Binds directly to 23S rRNA. The L1 stalk is quite mobile in the ribosome, and is involved in E site tRNA release.</text>
</comment>
<comment type="function">
    <text evidence="1">Protein L1 is also a translational repressor protein, it controls the translation of the L11 operon by binding to its mRNA.</text>
</comment>
<comment type="subunit">
    <text evidence="1">Part of the 50S ribosomal subunit.</text>
</comment>
<comment type="similarity">
    <text evidence="1">Belongs to the universal ribosomal protein uL1 family.</text>
</comment>